<name>SYFB_PSEU2</name>
<dbReference type="EC" id="6.1.1.20" evidence="1"/>
<dbReference type="EMBL" id="CP000075">
    <property type="protein sequence ID" value="AAY37210.1"/>
    <property type="molecule type" value="Genomic_DNA"/>
</dbReference>
<dbReference type="RefSeq" id="WP_011267471.1">
    <property type="nucleotide sequence ID" value="NC_007005.1"/>
</dbReference>
<dbReference type="RefSeq" id="YP_235248.1">
    <property type="nucleotide sequence ID" value="NC_007005.1"/>
</dbReference>
<dbReference type="SMR" id="Q4ZUG2"/>
<dbReference type="STRING" id="205918.Psyr_2167"/>
<dbReference type="KEGG" id="psb:Psyr_2167"/>
<dbReference type="PATRIC" id="fig|205918.7.peg.2217"/>
<dbReference type="eggNOG" id="COG0072">
    <property type="taxonomic scope" value="Bacteria"/>
</dbReference>
<dbReference type="HOGENOM" id="CLU_016891_0_0_6"/>
<dbReference type="OrthoDB" id="9805455at2"/>
<dbReference type="Proteomes" id="UP000000426">
    <property type="component" value="Chromosome"/>
</dbReference>
<dbReference type="GO" id="GO:0009328">
    <property type="term" value="C:phenylalanine-tRNA ligase complex"/>
    <property type="evidence" value="ECO:0007669"/>
    <property type="project" value="TreeGrafter"/>
</dbReference>
<dbReference type="GO" id="GO:0005524">
    <property type="term" value="F:ATP binding"/>
    <property type="evidence" value="ECO:0007669"/>
    <property type="project" value="UniProtKB-UniRule"/>
</dbReference>
<dbReference type="GO" id="GO:0000287">
    <property type="term" value="F:magnesium ion binding"/>
    <property type="evidence" value="ECO:0007669"/>
    <property type="project" value="UniProtKB-UniRule"/>
</dbReference>
<dbReference type="GO" id="GO:0004826">
    <property type="term" value="F:phenylalanine-tRNA ligase activity"/>
    <property type="evidence" value="ECO:0007669"/>
    <property type="project" value="UniProtKB-UniRule"/>
</dbReference>
<dbReference type="GO" id="GO:0000049">
    <property type="term" value="F:tRNA binding"/>
    <property type="evidence" value="ECO:0007669"/>
    <property type="project" value="UniProtKB-KW"/>
</dbReference>
<dbReference type="GO" id="GO:0006432">
    <property type="term" value="P:phenylalanyl-tRNA aminoacylation"/>
    <property type="evidence" value="ECO:0007669"/>
    <property type="project" value="UniProtKB-UniRule"/>
</dbReference>
<dbReference type="CDD" id="cd00769">
    <property type="entry name" value="PheRS_beta_core"/>
    <property type="match status" value="1"/>
</dbReference>
<dbReference type="CDD" id="cd02796">
    <property type="entry name" value="tRNA_bind_bactPheRS"/>
    <property type="match status" value="1"/>
</dbReference>
<dbReference type="FunFam" id="2.40.50.140:FF:000045">
    <property type="entry name" value="Phenylalanine--tRNA ligase beta subunit"/>
    <property type="match status" value="1"/>
</dbReference>
<dbReference type="FunFam" id="3.30.56.10:FF:000002">
    <property type="entry name" value="Phenylalanine--tRNA ligase beta subunit"/>
    <property type="match status" value="1"/>
</dbReference>
<dbReference type="FunFam" id="3.30.70.380:FF:000001">
    <property type="entry name" value="Phenylalanine--tRNA ligase beta subunit"/>
    <property type="match status" value="1"/>
</dbReference>
<dbReference type="FunFam" id="3.30.930.10:FF:000022">
    <property type="entry name" value="Phenylalanine--tRNA ligase beta subunit"/>
    <property type="match status" value="1"/>
</dbReference>
<dbReference type="FunFam" id="3.50.40.10:FF:000001">
    <property type="entry name" value="Phenylalanine--tRNA ligase beta subunit"/>
    <property type="match status" value="1"/>
</dbReference>
<dbReference type="Gene3D" id="3.30.56.10">
    <property type="match status" value="2"/>
</dbReference>
<dbReference type="Gene3D" id="3.30.930.10">
    <property type="entry name" value="Bira Bifunctional Protein, Domain 2"/>
    <property type="match status" value="1"/>
</dbReference>
<dbReference type="Gene3D" id="3.30.70.380">
    <property type="entry name" value="Ferrodoxin-fold anticodon-binding domain"/>
    <property type="match status" value="1"/>
</dbReference>
<dbReference type="Gene3D" id="2.40.50.140">
    <property type="entry name" value="Nucleic acid-binding proteins"/>
    <property type="match status" value="1"/>
</dbReference>
<dbReference type="Gene3D" id="3.50.40.10">
    <property type="entry name" value="Phenylalanyl-trna Synthetase, Chain B, domain 3"/>
    <property type="match status" value="1"/>
</dbReference>
<dbReference type="HAMAP" id="MF_00283">
    <property type="entry name" value="Phe_tRNA_synth_beta1"/>
    <property type="match status" value="1"/>
</dbReference>
<dbReference type="InterPro" id="IPR045864">
    <property type="entry name" value="aa-tRNA-synth_II/BPL/LPL"/>
</dbReference>
<dbReference type="InterPro" id="IPR005146">
    <property type="entry name" value="B3/B4_tRNA-bd"/>
</dbReference>
<dbReference type="InterPro" id="IPR009061">
    <property type="entry name" value="DNA-bd_dom_put_sf"/>
</dbReference>
<dbReference type="InterPro" id="IPR005121">
    <property type="entry name" value="Fdx_antiC-bd"/>
</dbReference>
<dbReference type="InterPro" id="IPR036690">
    <property type="entry name" value="Fdx_antiC-bd_sf"/>
</dbReference>
<dbReference type="InterPro" id="IPR012340">
    <property type="entry name" value="NA-bd_OB-fold"/>
</dbReference>
<dbReference type="InterPro" id="IPR045060">
    <property type="entry name" value="Phe-tRNA-ligase_IIc_bsu"/>
</dbReference>
<dbReference type="InterPro" id="IPR004532">
    <property type="entry name" value="Phe-tRNA-ligase_IIc_bsu_bact"/>
</dbReference>
<dbReference type="InterPro" id="IPR020825">
    <property type="entry name" value="Phe-tRNA_synthase-like_B3/B4"/>
</dbReference>
<dbReference type="InterPro" id="IPR041616">
    <property type="entry name" value="PheRS_beta_core"/>
</dbReference>
<dbReference type="InterPro" id="IPR002547">
    <property type="entry name" value="tRNA-bd_dom"/>
</dbReference>
<dbReference type="InterPro" id="IPR033714">
    <property type="entry name" value="tRNA_bind_bactPheRS"/>
</dbReference>
<dbReference type="InterPro" id="IPR005147">
    <property type="entry name" value="tRNA_synthase_B5-dom"/>
</dbReference>
<dbReference type="NCBIfam" id="TIGR00472">
    <property type="entry name" value="pheT_bact"/>
    <property type="match status" value="1"/>
</dbReference>
<dbReference type="NCBIfam" id="NF045760">
    <property type="entry name" value="YtpR"/>
    <property type="match status" value="1"/>
</dbReference>
<dbReference type="PANTHER" id="PTHR10947:SF0">
    <property type="entry name" value="PHENYLALANINE--TRNA LIGASE BETA SUBUNIT"/>
    <property type="match status" value="1"/>
</dbReference>
<dbReference type="PANTHER" id="PTHR10947">
    <property type="entry name" value="PHENYLALANYL-TRNA SYNTHETASE BETA CHAIN AND LEUCINE-RICH REPEAT-CONTAINING PROTEIN 47"/>
    <property type="match status" value="1"/>
</dbReference>
<dbReference type="Pfam" id="PF03483">
    <property type="entry name" value="B3_4"/>
    <property type="match status" value="1"/>
</dbReference>
<dbReference type="Pfam" id="PF03484">
    <property type="entry name" value="B5"/>
    <property type="match status" value="1"/>
</dbReference>
<dbReference type="Pfam" id="PF03147">
    <property type="entry name" value="FDX-ACB"/>
    <property type="match status" value="1"/>
</dbReference>
<dbReference type="Pfam" id="PF01588">
    <property type="entry name" value="tRNA_bind"/>
    <property type="match status" value="1"/>
</dbReference>
<dbReference type="Pfam" id="PF17759">
    <property type="entry name" value="tRNA_synthFbeta"/>
    <property type="match status" value="1"/>
</dbReference>
<dbReference type="SMART" id="SM00873">
    <property type="entry name" value="B3_4"/>
    <property type="match status" value="1"/>
</dbReference>
<dbReference type="SMART" id="SM00874">
    <property type="entry name" value="B5"/>
    <property type="match status" value="1"/>
</dbReference>
<dbReference type="SMART" id="SM00896">
    <property type="entry name" value="FDX-ACB"/>
    <property type="match status" value="1"/>
</dbReference>
<dbReference type="SUPFAM" id="SSF54991">
    <property type="entry name" value="Anticodon-binding domain of PheRS"/>
    <property type="match status" value="1"/>
</dbReference>
<dbReference type="SUPFAM" id="SSF55681">
    <property type="entry name" value="Class II aaRS and biotin synthetases"/>
    <property type="match status" value="1"/>
</dbReference>
<dbReference type="SUPFAM" id="SSF50249">
    <property type="entry name" value="Nucleic acid-binding proteins"/>
    <property type="match status" value="1"/>
</dbReference>
<dbReference type="SUPFAM" id="SSF56037">
    <property type="entry name" value="PheT/TilS domain"/>
    <property type="match status" value="1"/>
</dbReference>
<dbReference type="SUPFAM" id="SSF46955">
    <property type="entry name" value="Putative DNA-binding domain"/>
    <property type="match status" value="1"/>
</dbReference>
<dbReference type="PROSITE" id="PS51483">
    <property type="entry name" value="B5"/>
    <property type="match status" value="1"/>
</dbReference>
<dbReference type="PROSITE" id="PS51447">
    <property type="entry name" value="FDX_ACB"/>
    <property type="match status" value="1"/>
</dbReference>
<dbReference type="PROSITE" id="PS50886">
    <property type="entry name" value="TRBD"/>
    <property type="match status" value="1"/>
</dbReference>
<evidence type="ECO:0000255" key="1">
    <source>
        <dbReference type="HAMAP-Rule" id="MF_00283"/>
    </source>
</evidence>
<sequence length="792" mass="86441">MKFSEQWLRGWVSPQVSRDELVARLSMAGLEVDSVTLAAGVFSGVVVGEVLSTEQHPDADKLRVCQVSNGSETFQVVCGAPNVRPGLKIPFAMIGAELPGDFKIKKAKLRGVESNGMLCSAAELQAGEGNDGLMELAADAPVGQDIRVYLSLDDASIEVDLTPNRGDCLSVAGLAREVGALYAAEVTRPQVAAVSAVHDEVRPVEVLAPAACPRYLGRVIRNVDLSRPTPLWMVERLRRSDVRSIDAAVDITNYVMLELGQPLHAFDLAEINGGIRVRMAEEGEKLVLLDGQEVSLRADTLVIADHQRALAIAGVMGGEHSGVTAGTRDIFLESAFFDTISVAGKARSYGLHTDASHRYERGVDWQLAREAMERATGLLLEITGGEAGPVIEVVSEQHLPSIAPVTLRASRVEQMLGLVIENAEIERLLKGLGLAVTAEADGQWRVEVPSHRFDISLEVDLIEELARLYGYNRLPVRYPQARLAPQAKAEASGDLPELRRLLVARGYQEAITYSFIDPKWFELFSPGAKPLLLANPISNDMAAMRASLWPGLVKALQHNLNRQQDRVRMFESGLRFVGQLDGLKQEPMLAGVVCGSRLPEGWAQGRDAVDFFDVKADVEAVLGFAGALGEFTFTPGQHPALHPGQTARIERDGREVGFLGAIHPELSKTLGLDRPVFVFELVLAEVSTGRLPKFHELSRFPEVRRDLALLADRDVSASAVLDVIRENAGEWLTDLRLFDVYQGKGIDPHRKSLAVGLTWQHPSRTLNDDEVNATTLAILTSLEERLNATLRK</sequence>
<gene>
    <name evidence="1" type="primary">pheT</name>
    <name type="ordered locus">Psyr_2167</name>
</gene>
<proteinExistence type="inferred from homology"/>
<comment type="catalytic activity">
    <reaction evidence="1">
        <text>tRNA(Phe) + L-phenylalanine + ATP = L-phenylalanyl-tRNA(Phe) + AMP + diphosphate + H(+)</text>
        <dbReference type="Rhea" id="RHEA:19413"/>
        <dbReference type="Rhea" id="RHEA-COMP:9668"/>
        <dbReference type="Rhea" id="RHEA-COMP:9699"/>
        <dbReference type="ChEBI" id="CHEBI:15378"/>
        <dbReference type="ChEBI" id="CHEBI:30616"/>
        <dbReference type="ChEBI" id="CHEBI:33019"/>
        <dbReference type="ChEBI" id="CHEBI:58095"/>
        <dbReference type="ChEBI" id="CHEBI:78442"/>
        <dbReference type="ChEBI" id="CHEBI:78531"/>
        <dbReference type="ChEBI" id="CHEBI:456215"/>
        <dbReference type="EC" id="6.1.1.20"/>
    </reaction>
</comment>
<comment type="cofactor">
    <cofactor evidence="1">
        <name>Mg(2+)</name>
        <dbReference type="ChEBI" id="CHEBI:18420"/>
    </cofactor>
    <text evidence="1">Binds 2 magnesium ions per tetramer.</text>
</comment>
<comment type="subunit">
    <text evidence="1">Tetramer of two alpha and two beta subunits.</text>
</comment>
<comment type="subcellular location">
    <subcellularLocation>
        <location evidence="1">Cytoplasm</location>
    </subcellularLocation>
</comment>
<comment type="similarity">
    <text evidence="1">Belongs to the phenylalanyl-tRNA synthetase beta subunit family. Type 1 subfamily.</text>
</comment>
<keyword id="KW-0030">Aminoacyl-tRNA synthetase</keyword>
<keyword id="KW-0067">ATP-binding</keyword>
<keyword id="KW-0963">Cytoplasm</keyword>
<keyword id="KW-0436">Ligase</keyword>
<keyword id="KW-0460">Magnesium</keyword>
<keyword id="KW-0479">Metal-binding</keyword>
<keyword id="KW-0547">Nucleotide-binding</keyword>
<keyword id="KW-0648">Protein biosynthesis</keyword>
<keyword id="KW-0694">RNA-binding</keyword>
<keyword id="KW-0820">tRNA-binding</keyword>
<accession>Q4ZUG2</accession>
<protein>
    <recommendedName>
        <fullName evidence="1">Phenylalanine--tRNA ligase beta subunit</fullName>
        <ecNumber evidence="1">6.1.1.20</ecNumber>
    </recommendedName>
    <alternativeName>
        <fullName evidence="1">Phenylalanyl-tRNA synthetase beta subunit</fullName>
        <shortName evidence="1">PheRS</shortName>
    </alternativeName>
</protein>
<feature type="chain" id="PRO_0000232079" description="Phenylalanine--tRNA ligase beta subunit">
    <location>
        <begin position="1"/>
        <end position="792"/>
    </location>
</feature>
<feature type="domain" description="tRNA-binding" evidence="1">
    <location>
        <begin position="39"/>
        <end position="147"/>
    </location>
</feature>
<feature type="domain" description="B5" evidence="1">
    <location>
        <begin position="400"/>
        <end position="476"/>
    </location>
</feature>
<feature type="domain" description="FDX-ACB" evidence="1">
    <location>
        <begin position="698"/>
        <end position="791"/>
    </location>
</feature>
<feature type="binding site" evidence="1">
    <location>
        <position position="454"/>
    </location>
    <ligand>
        <name>Mg(2+)</name>
        <dbReference type="ChEBI" id="CHEBI:18420"/>
        <note>shared with alpha subunit</note>
    </ligand>
</feature>
<feature type="binding site" evidence="1">
    <location>
        <position position="460"/>
    </location>
    <ligand>
        <name>Mg(2+)</name>
        <dbReference type="ChEBI" id="CHEBI:18420"/>
        <note>shared with alpha subunit</note>
    </ligand>
</feature>
<feature type="binding site" evidence="1">
    <location>
        <position position="463"/>
    </location>
    <ligand>
        <name>Mg(2+)</name>
        <dbReference type="ChEBI" id="CHEBI:18420"/>
        <note>shared with alpha subunit</note>
    </ligand>
</feature>
<feature type="binding site" evidence="1">
    <location>
        <position position="464"/>
    </location>
    <ligand>
        <name>Mg(2+)</name>
        <dbReference type="ChEBI" id="CHEBI:18420"/>
        <note>shared with alpha subunit</note>
    </ligand>
</feature>
<organism>
    <name type="scientific">Pseudomonas syringae pv. syringae (strain B728a)</name>
    <dbReference type="NCBI Taxonomy" id="205918"/>
    <lineage>
        <taxon>Bacteria</taxon>
        <taxon>Pseudomonadati</taxon>
        <taxon>Pseudomonadota</taxon>
        <taxon>Gammaproteobacteria</taxon>
        <taxon>Pseudomonadales</taxon>
        <taxon>Pseudomonadaceae</taxon>
        <taxon>Pseudomonas</taxon>
        <taxon>Pseudomonas syringae</taxon>
    </lineage>
</organism>
<reference key="1">
    <citation type="journal article" date="2005" name="Proc. Natl. Acad. Sci. U.S.A.">
        <title>Comparison of the complete genome sequences of Pseudomonas syringae pv. syringae B728a and pv. tomato DC3000.</title>
        <authorList>
            <person name="Feil H."/>
            <person name="Feil W.S."/>
            <person name="Chain P."/>
            <person name="Larimer F."/>
            <person name="Dibartolo G."/>
            <person name="Copeland A."/>
            <person name="Lykidis A."/>
            <person name="Trong S."/>
            <person name="Nolan M."/>
            <person name="Goltsman E."/>
            <person name="Thiel J."/>
            <person name="Malfatti S."/>
            <person name="Loper J.E."/>
            <person name="Lapidus A."/>
            <person name="Detter J.C."/>
            <person name="Land M."/>
            <person name="Richardson P.M."/>
            <person name="Kyrpides N.C."/>
            <person name="Ivanova N."/>
            <person name="Lindow S.E."/>
        </authorList>
    </citation>
    <scope>NUCLEOTIDE SEQUENCE [LARGE SCALE GENOMIC DNA]</scope>
    <source>
        <strain>B728a</strain>
    </source>
</reference>